<gene>
    <name evidence="3" type="primary">TMEM30A</name>
    <name type="synonym">CDC50A</name>
</gene>
<name>CC50A_PONAB</name>
<accession>Q5R6C0</accession>
<sequence>MAMNYNAKDEVDGGPPCAPGGSAKTRRPDNTAFKQQRLPAWQPILTAGTVLPIFFIIGLIFIPIGIGIFVTSNNIREIEIDYTGTEPSSPCNKCLSPDVTPCICTINFTLEKSFEGNVFMYYGLSNFYQNHRRYVKSRDDSQLNGDSSALLNPSKECEPYRRNEDKPIAPCGAIANSMFNDTLELFLIGNDSYPIPIALKKKGIAWWTDKNVKFRNPPGGDNLKERFKGTTKPVNWLKPVYMLDSDPDNNGFINEDFIVWMRTAALPTFRKLYRLIERKSDLHPTLPAGRYSLNVTYNYPVHYFDGRKRMILSTISWMGGKNPFLGIAYIAVGSISFLLGVVLLVINHKYRNSSNTADITI</sequence>
<comment type="function">
    <text evidence="1">Accessory component of a P4-ATPase flippase complex which catalyzes the hydrolysis of ATP coupled to the transport of aminophospholipids from the outer to the inner leaflet of various membranes and ensures the maintenance of asymmetric distribution of phospholipids. Phospholipid translocation also seems to be implicated in vesicle formation and in uptake of lipid signaling molecules. The beta subunit may assist in binding of the phospholipid substrate. Required for the proper folding, assembly and ER to Golgi exit of the ATP8A2:TMEM30A flippase complex. ATP8A2:TMEM30A may be involved in regulation of neurite outgrowth, and, reconstituted to liposomes, predomiminantly transports phosphatidylserine (PS) and to a lesser extent phosphatidylethanolamine (PE). The ATP8A1:TMEM30A flippase complex seems to play a role in regulation of cell migration probably involving flippase-mediated translocation of phosphatidylethanolamine (PE) at the plasma membrane. Required for the formation of the ATP8A2, ATP8B1 and ATP8B2 P-type ATPAse intermediate phosphoenzymes. Involved in uptake of platelet-activating factor (PAF). Can also mediate the export of alpha subunits ATP8A1, ATP8B1, ATP8B2, ATP8B4, ATP10A, ATP10B, ATP10D, ATP11A, ATP11B and ATP11C from the ER to other membrane localizations (By similarity).</text>
</comment>
<comment type="subunit">
    <text evidence="3">Component of various P4-ATPase flippase complexes which consists of a catalytic alpha subunit and an accessory beta subunit. Interacts with ATP8A1 to form a flippase complex; this complex forms an intermediate phosphoenzyme. Interacts with ATP8A2 to form a flippase complex (By similarity). ATP8B1:TMEM30A and ATP8B2:TMEM30A flippase complexes have been shown to form intermediate phosphoenzymes in vitro. Interacts with alpha subunits ATP8A1, ATP8B1, ATP8B2, ATP8B4, ATP10A, ATP10B, ATP10D, ATP11A, ATP11B and ATP11C.</text>
</comment>
<comment type="subcellular location">
    <subcellularLocation>
        <location evidence="3">Membrane</location>
        <topology evidence="1">Multi-pass membrane protein</topology>
    </subcellularLocation>
    <subcellularLocation>
        <location evidence="3">Golgi apparatus</location>
    </subcellularLocation>
    <subcellularLocation>
        <location evidence="3">Cytoplasmic vesicle</location>
        <location evidence="3">Secretory vesicle membrane</location>
    </subcellularLocation>
    <subcellularLocation>
        <location evidence="3">Apical cell membrane</location>
    </subcellularLocation>
    <subcellularLocation>
        <location evidence="2">Photoreceptor inner segment</location>
    </subcellularLocation>
    <subcellularLocation>
        <location evidence="2">Cell projection</location>
        <location evidence="2">Cilium</location>
        <location evidence="2">Photoreceptor outer segment</location>
    </subcellularLocation>
</comment>
<comment type="domain">
    <text evidence="1">The N-terminal domain seems to play a role in the reaction cycle of the catalytic subunit such as ATP8A2.</text>
</comment>
<comment type="PTM">
    <text evidence="1">N-glycosylated. Contains high mannose-type oligosaccharides (By similarity).</text>
</comment>
<comment type="similarity">
    <text evidence="6">Belongs to the CDC50/LEM3 family.</text>
</comment>
<evidence type="ECO:0000250" key="1"/>
<evidence type="ECO:0000250" key="2">
    <source>
        <dbReference type="UniProtKB" id="Q17QL5"/>
    </source>
</evidence>
<evidence type="ECO:0000250" key="3">
    <source>
        <dbReference type="UniProtKB" id="Q9NV96"/>
    </source>
</evidence>
<evidence type="ECO:0000255" key="4"/>
<evidence type="ECO:0000256" key="5">
    <source>
        <dbReference type="SAM" id="MobiDB-lite"/>
    </source>
</evidence>
<evidence type="ECO:0000305" key="6"/>
<protein>
    <recommendedName>
        <fullName evidence="3">Cell cycle control protein 50A</fullName>
    </recommendedName>
    <alternativeName>
        <fullName>P4-ATPase flippase complex beta subunit TMEM30A</fullName>
    </alternativeName>
    <alternativeName>
        <fullName>Transmembrane protein 30A</fullName>
    </alternativeName>
</protein>
<keyword id="KW-0007">Acetylation</keyword>
<keyword id="KW-1003">Cell membrane</keyword>
<keyword id="KW-0966">Cell projection</keyword>
<keyword id="KW-0968">Cytoplasmic vesicle</keyword>
<keyword id="KW-1015">Disulfide bond</keyword>
<keyword id="KW-0325">Glycoprotein</keyword>
<keyword id="KW-0333">Golgi apparatus</keyword>
<keyword id="KW-0445">Lipid transport</keyword>
<keyword id="KW-0472">Membrane</keyword>
<keyword id="KW-1185">Reference proteome</keyword>
<keyword id="KW-0812">Transmembrane</keyword>
<keyword id="KW-1133">Transmembrane helix</keyword>
<keyword id="KW-0813">Transport</keyword>
<dbReference type="EMBL" id="CR860571">
    <property type="protein sequence ID" value="CAH92696.1"/>
    <property type="molecule type" value="mRNA"/>
</dbReference>
<dbReference type="EMBL" id="CR860414">
    <property type="protein sequence ID" value="CAH92539.1"/>
    <property type="molecule type" value="mRNA"/>
</dbReference>
<dbReference type="SMR" id="Q5R6C0"/>
<dbReference type="FunCoup" id="Q5R6C0">
    <property type="interactions" value="2530"/>
</dbReference>
<dbReference type="STRING" id="9601.ENSPPYP00000018784"/>
<dbReference type="GlyCosmos" id="Q5R6C0">
    <property type="glycosylation" value="3 sites, No reported glycans"/>
</dbReference>
<dbReference type="eggNOG" id="KOG2952">
    <property type="taxonomic scope" value="Eukaryota"/>
</dbReference>
<dbReference type="HOGENOM" id="CLU_025025_1_0_1"/>
<dbReference type="InParanoid" id="Q5R6C0"/>
<dbReference type="Proteomes" id="UP000001595">
    <property type="component" value="Unplaced"/>
</dbReference>
<dbReference type="GO" id="GO:0016324">
    <property type="term" value="C:apical plasma membrane"/>
    <property type="evidence" value="ECO:0007669"/>
    <property type="project" value="UniProtKB-SubCell"/>
</dbReference>
<dbReference type="GO" id="GO:0005783">
    <property type="term" value="C:endoplasmic reticulum"/>
    <property type="evidence" value="ECO:0007669"/>
    <property type="project" value="TreeGrafter"/>
</dbReference>
<dbReference type="GO" id="GO:0005794">
    <property type="term" value="C:Golgi apparatus"/>
    <property type="evidence" value="ECO:0007669"/>
    <property type="project" value="UniProtKB-SubCell"/>
</dbReference>
<dbReference type="GO" id="GO:1990531">
    <property type="term" value="C:phospholipid-translocating ATPase complex"/>
    <property type="evidence" value="ECO:0000250"/>
    <property type="project" value="UniProtKB"/>
</dbReference>
<dbReference type="GO" id="GO:0001917">
    <property type="term" value="C:photoreceptor inner segment"/>
    <property type="evidence" value="ECO:0007669"/>
    <property type="project" value="UniProtKB-SubCell"/>
</dbReference>
<dbReference type="GO" id="GO:0001750">
    <property type="term" value="C:photoreceptor outer segment"/>
    <property type="evidence" value="ECO:0007669"/>
    <property type="project" value="UniProtKB-SubCell"/>
</dbReference>
<dbReference type="GO" id="GO:0030658">
    <property type="term" value="C:transport vesicle membrane"/>
    <property type="evidence" value="ECO:0007669"/>
    <property type="project" value="UniProtKB-SubCell"/>
</dbReference>
<dbReference type="GO" id="GO:0045332">
    <property type="term" value="P:phospholipid translocation"/>
    <property type="evidence" value="ECO:0007669"/>
    <property type="project" value="TreeGrafter"/>
</dbReference>
<dbReference type="InterPro" id="IPR005045">
    <property type="entry name" value="CDC50/LEM3_fam"/>
</dbReference>
<dbReference type="PANTHER" id="PTHR10926">
    <property type="entry name" value="CELL CYCLE CONTROL PROTEIN 50"/>
    <property type="match status" value="1"/>
</dbReference>
<dbReference type="PANTHER" id="PTHR10926:SF17">
    <property type="entry name" value="CELL CYCLE CONTROL PROTEIN 50A"/>
    <property type="match status" value="1"/>
</dbReference>
<dbReference type="Pfam" id="PF03381">
    <property type="entry name" value="CDC50"/>
    <property type="match status" value="1"/>
</dbReference>
<dbReference type="PIRSF" id="PIRSF015840">
    <property type="entry name" value="DUF284_TM_euk"/>
    <property type="match status" value="1"/>
</dbReference>
<reference key="1">
    <citation type="submission" date="2004-11" db="EMBL/GenBank/DDBJ databases">
        <authorList>
            <consortium name="The German cDNA consortium"/>
        </authorList>
    </citation>
    <scope>NUCLEOTIDE SEQUENCE [LARGE SCALE MRNA]</scope>
    <source>
        <tissue>Brain cortex</tissue>
    </source>
</reference>
<proteinExistence type="evidence at transcript level"/>
<organism>
    <name type="scientific">Pongo abelii</name>
    <name type="common">Sumatran orangutan</name>
    <name type="synonym">Pongo pygmaeus abelii</name>
    <dbReference type="NCBI Taxonomy" id="9601"/>
    <lineage>
        <taxon>Eukaryota</taxon>
        <taxon>Metazoa</taxon>
        <taxon>Chordata</taxon>
        <taxon>Craniata</taxon>
        <taxon>Vertebrata</taxon>
        <taxon>Euteleostomi</taxon>
        <taxon>Mammalia</taxon>
        <taxon>Eutheria</taxon>
        <taxon>Euarchontoglires</taxon>
        <taxon>Primates</taxon>
        <taxon>Haplorrhini</taxon>
        <taxon>Catarrhini</taxon>
        <taxon>Hominidae</taxon>
        <taxon>Pongo</taxon>
    </lineage>
</organism>
<feature type="initiator methionine" description="Removed" evidence="3">
    <location>
        <position position="1"/>
    </location>
</feature>
<feature type="chain" id="PRO_0000244471" description="Cell cycle control protein 50A">
    <location>
        <begin position="2"/>
        <end position="361"/>
    </location>
</feature>
<feature type="topological domain" description="Cytoplasmic" evidence="4">
    <location>
        <begin position="2"/>
        <end position="49"/>
    </location>
</feature>
<feature type="transmembrane region" description="Helical" evidence="4">
    <location>
        <begin position="50"/>
        <end position="70"/>
    </location>
</feature>
<feature type="topological domain" description="Exoplasmic loop" evidence="4">
    <location>
        <begin position="71"/>
        <end position="325"/>
    </location>
</feature>
<feature type="transmembrane region" description="Helical" evidence="4">
    <location>
        <begin position="326"/>
        <end position="346"/>
    </location>
</feature>
<feature type="topological domain" description="Cytoplasmic" evidence="4">
    <location>
        <begin position="347"/>
        <end position="361"/>
    </location>
</feature>
<feature type="region of interest" description="Disordered" evidence="5">
    <location>
        <begin position="1"/>
        <end position="28"/>
    </location>
</feature>
<feature type="region of interest" description="Required for ATPase and aminophospholipid flippase activity" evidence="2">
    <location>
        <begin position="2"/>
        <end position="48"/>
    </location>
</feature>
<feature type="region of interest" description="Interaction with ATP8A2" evidence="2">
    <location>
        <begin position="49"/>
        <end position="348"/>
    </location>
</feature>
<feature type="modified residue" description="N-acetylalanine" evidence="3">
    <location>
        <position position="2"/>
    </location>
</feature>
<feature type="glycosylation site" description="N-linked (GlcNAc...) asparagine" evidence="4">
    <location>
        <position position="180"/>
    </location>
</feature>
<feature type="glycosylation site" description="N-linked (GlcNAc...) asparagine" evidence="4">
    <location>
        <position position="190"/>
    </location>
</feature>
<feature type="glycosylation site" description="N-linked (GlcNAc...) asparagine" evidence="4">
    <location>
        <position position="294"/>
    </location>
</feature>
<feature type="disulfide bond" evidence="3">
    <location>
        <begin position="91"/>
        <end position="104"/>
    </location>
</feature>
<feature type="disulfide bond" evidence="3">
    <location>
        <begin position="94"/>
        <end position="102"/>
    </location>
</feature>
<feature type="disulfide bond" evidence="3">
    <location>
        <begin position="157"/>
        <end position="171"/>
    </location>
</feature>